<proteinExistence type="evidence at protein level"/>
<protein>
    <recommendedName>
        <fullName>Calsequestrin-1</fullName>
    </recommendedName>
    <alternativeName>
        <fullName>Aspartactin</fullName>
    </alternativeName>
    <alternativeName>
        <fullName>Calsequestrin, skeletal muscle isoform</fullName>
    </alternativeName>
    <alternativeName>
        <fullName>Laminin-binding protein</fullName>
    </alternativeName>
</protein>
<evidence type="ECO:0000250" key="1">
    <source>
        <dbReference type="UniProtKB" id="O09165"/>
    </source>
</evidence>
<evidence type="ECO:0000250" key="2">
    <source>
        <dbReference type="UniProtKB" id="P19633"/>
    </source>
</evidence>
<evidence type="ECO:0000250" key="3">
    <source>
        <dbReference type="UniProtKB" id="P31415"/>
    </source>
</evidence>
<evidence type="ECO:0000256" key="4">
    <source>
        <dbReference type="SAM" id="MobiDB-lite"/>
    </source>
</evidence>
<evidence type="ECO:0000269" key="5">
    <source>
    </source>
</evidence>
<evidence type="ECO:0000269" key="6">
    <source>
    </source>
</evidence>
<evidence type="ECO:0000269" key="7">
    <source>
    </source>
</evidence>
<evidence type="ECO:0000269" key="8">
    <source>
    </source>
</evidence>
<evidence type="ECO:0000269" key="9">
    <source>
    </source>
</evidence>
<evidence type="ECO:0000269" key="10">
    <source>
    </source>
</evidence>
<evidence type="ECO:0000269" key="11">
    <source>
    </source>
</evidence>
<evidence type="ECO:0000269" key="12">
    <source>
    </source>
</evidence>
<evidence type="ECO:0000269" key="13">
    <source>
    </source>
</evidence>
<evidence type="ECO:0000269" key="14">
    <source>
    </source>
</evidence>
<evidence type="ECO:0000269" key="15">
    <source>
    </source>
</evidence>
<evidence type="ECO:0000303" key="16">
    <source>
    </source>
</evidence>
<evidence type="ECO:0000305" key="17"/>
<evidence type="ECO:0007829" key="18">
    <source>
        <dbReference type="PDB" id="1A8Y"/>
    </source>
</evidence>
<evidence type="ECO:0007829" key="19">
    <source>
        <dbReference type="PDB" id="3TRP"/>
    </source>
</evidence>
<evidence type="ECO:0007829" key="20">
    <source>
        <dbReference type="PDB" id="3US3"/>
    </source>
</evidence>
<accession>P07221</accession>
<reference key="1">
    <citation type="journal article" date="1987" name="Proc. Natl. Acad. Sci. U.S.A.">
        <title>Amino acid sequence of rabbit fast-twitch skeletal muscle calsequestrin deduced from cDNA and peptide sequencing.</title>
        <authorList>
            <person name="Fliegel L."/>
            <person name="Ohnishi M."/>
            <person name="Carpenter M.R."/>
            <person name="Khanna V.K."/>
            <person name="Reithmeier R.A.F."/>
            <person name="McLennan D.H."/>
        </authorList>
    </citation>
    <scope>NUCLEOTIDE SEQUENCE [MRNA]</scope>
    <scope>PARTIAL PROTEIN SEQUENCE</scope>
    <scope>TISSUE SPECIFICITY</scope>
</reference>
<reference key="2">
    <citation type="journal article" date="1988" name="J. Biol. Chem.">
        <title>Structure of the rabbit fast-twitch skeletal muscle calsequestrin gene.</title>
        <authorList>
            <person name="Zarain-Herzberg A."/>
            <person name="Fliegel L."/>
            <person name="Maclennan D.H."/>
        </authorList>
    </citation>
    <scope>NUCLEOTIDE SEQUENCE [GENOMIC DNA]</scope>
</reference>
<reference key="3">
    <citation type="journal article" date="1987" name="Biochemistry">
        <title>Characterization of cardiac calsequestrin.</title>
        <authorList>
            <person name="Slupsky J.R."/>
            <person name="Ohnishi M."/>
            <person name="Carpenter M.R."/>
            <person name="Reithmeier R.A.F."/>
        </authorList>
    </citation>
    <scope>PROTEIN SEQUENCE OF 29-87</scope>
    <source>
        <tissue>Skeletal muscle</tissue>
    </source>
</reference>
<reference key="4">
    <citation type="journal article" date="1987" name="Biochemistry">
        <title>Fragmentation of rabbit skeletal muscle calsequestrin: spectral and ion binding properties of the carboxyl-terminal region.</title>
        <authorList>
            <person name="Ohnishi M."/>
            <person name="Reithmeier R.A.F."/>
        </authorList>
    </citation>
    <scope>PROTEIN SEQUENCE OF 330-388</scope>
    <scope>FUNCTION</scope>
    <scope>TISSUE SPECIFICITY</scope>
    <source>
        <tissue>Skeletal muscle</tissue>
    </source>
</reference>
<reference key="5">
    <citation type="journal article" date="1991" name="J. Biol. Chem.">
        <title>Phosphorylation of cardiac and skeletal muscle calsequestrin isoforms by casein kinase II. Demonstration of a cluster of unique rapidly phosphorylated sites in cardiac calsequestrin.</title>
        <authorList>
            <person name="Cala S.E."/>
            <person name="Jones L.R."/>
        </authorList>
    </citation>
    <scope>LACK OF PHOSPHORYLATION</scope>
</reference>
<reference key="6">
    <citation type="journal article" date="1993" name="J. Biol. Chem.">
        <title>Ca(2+)-induced folding and aggregation of skeletal muscle sarcoplasmic reticulum calsequestrin. The involvement of the trifluoperazine-binding site.</title>
        <authorList>
            <person name="He Z."/>
            <person name="Dunker A.K."/>
            <person name="Wesson C.R."/>
            <person name="Trumble W.R."/>
        </authorList>
    </citation>
    <scope>FUNCTION</scope>
    <scope>SUBCELLULAR LOCATION</scope>
    <scope>SUBUNIT</scope>
    <scope>TISSUE SPECIFICITY</scope>
</reference>
<reference key="7">
    <citation type="journal article" date="2005" name="Biophys. J.">
        <title>Regulation of ryanodine receptors by calsequestrin: effect of high luminal Ca2+ and phosphorylation.</title>
        <authorList>
            <person name="Beard N.A."/>
            <person name="Casarotto M.G."/>
            <person name="Wei L."/>
            <person name="Varsanyi M."/>
            <person name="Laver D.R."/>
            <person name="Dulhunty A.F."/>
        </authorList>
    </citation>
    <scope>FUNCTION</scope>
    <scope>SUBCELLULAR LOCATION</scope>
    <scope>INTERACTION WITH TRDN AND ASPH</scope>
</reference>
<reference key="8">
    <citation type="journal article" date="2008" name="Cell Calcium">
        <title>Phosphorylation of skeletal muscle calsequestrin enhances its Ca2+ binding capacity and promotes its association with junctin.</title>
        <authorList>
            <person name="Beard N.A."/>
            <person name="Wei L."/>
            <person name="Cheung S.N."/>
            <person name="Kimura T."/>
            <person name="Varsanyi M."/>
            <person name="Dulhunty A.F."/>
        </authorList>
    </citation>
    <scope>FUNCTION</scope>
    <scope>SUBCELLULAR LOCATION</scope>
    <scope>SUBUNIT</scope>
    <scope>INTERACTION WITH TRDN AND ASPH</scope>
</reference>
<reference key="9">
    <citation type="journal article" date="2009" name="Int. J. Biochem. Cell Biol.">
        <title>Junctin and triadin each activate skeletal ryanodine receptors but junctin alone mediates functional interactions with calsequestrin.</title>
        <authorList>
            <person name="Wei L."/>
            <person name="Gallant E.M."/>
            <person name="Dulhunty A.F."/>
            <person name="Beard N.A."/>
        </authorList>
    </citation>
    <scope>INTERACTION WITH TRDN AND ASPH</scope>
    <scope>FUNCTION</scope>
</reference>
<reference key="10">
    <citation type="journal article" date="1998" name="Nat. Struct. Biol.">
        <title>Crystal structure of calsequestrin from rabbit skeletal muscle sarcoplasmic reticulum.</title>
        <authorList>
            <person name="Wang S."/>
            <person name="Trumble W.R."/>
            <person name="Liao H."/>
            <person name="Wesson C.R."/>
            <person name="Dunker A.K."/>
            <person name="Kang C.H."/>
        </authorList>
    </citation>
    <scope>X-RAY CRYSTALLOGRAPHY (2.4 ANGSTROMS) OF 31-375</scope>
    <scope>SUBUNIT</scope>
    <source>
        <tissue>Skeletal muscle</tissue>
    </source>
</reference>
<reference key="11">
    <citation type="journal article" date="2012" name="J. Biol. Chem.">
        <title>Glycosylation of skeletal calsequestrin: implications for its function.</title>
        <authorList>
            <person name="Sanchez E.J."/>
            <person name="Lewis K.M."/>
            <person name="Munske G.R."/>
            <person name="Nissen M.S."/>
            <person name="Kang C."/>
        </authorList>
    </citation>
    <scope>X-RAY CRYSTALLOGRAPHY (1.74 ANGSTROMS) OF 29-395 IN COMPLEX WITH CALCIUM</scope>
    <scope>FUNCTION</scope>
    <scope>SUBUNIT</scope>
    <scope>LACK OF PHOSPHORYLATION AT THR-381</scope>
    <scope>GLYCOSYLATION AT ASN-344</scope>
</reference>
<reference key="12">
    <citation type="journal article" date="2012" name="J. Biol. Chem.">
        <title>High-capacity Ca2+ binding of human skeletal calsequestrin.</title>
        <authorList>
            <person name="Sanchez E.J."/>
            <person name="Lewis K.M."/>
            <person name="Danna B.R."/>
            <person name="Kang C."/>
        </authorList>
    </citation>
    <scope>X-RAY CRYSTALLOGRAPHY (1.88 ANGSTROMS) OF 29-381 IN COMPLEX WITH CALCIUM</scope>
    <scope>FUNCTION</scope>
    <scope>SUBUNIT</scope>
</reference>
<sequence length="395" mass="45263">MNAADRMGARVALLLLLVLGSPQSGVHGEEGLDFPEYDGVDRVINVNAKNYKNVFKKYEVLALLYHEPPEDDKASQRQFEMEELILELAAQVLEDKGVGFGLVDSEKDAAVAKKLGLTEEDSIYVFKEDEVIEYDGEFSADTLVEFLLDVLEDPVELIEGERELQAFENIEDEIKLIGYFKNKDSEHYKAFKEAAEEFHPYIPFFATFDSKVAKKLTLKLNEIDFYEAFMEEPVTIPDKPNSEEEIVNFVEEHRRSTLRKLKPESMYETWEDDMDGIHIVAFAEEADPDGYEFLEILKSVAQDNTDNPDLSIIWIDPDDFPLLVPYWEKTFDIDLSAPQIGVVNVTDADSVWMEMDDEEDLPSAEELEDWLEDVLEGEINTEDDDDEDDDDDDDD</sequence>
<organism>
    <name type="scientific">Oryctolagus cuniculus</name>
    <name type="common">Rabbit</name>
    <dbReference type="NCBI Taxonomy" id="9986"/>
    <lineage>
        <taxon>Eukaryota</taxon>
        <taxon>Metazoa</taxon>
        <taxon>Chordata</taxon>
        <taxon>Craniata</taxon>
        <taxon>Vertebrata</taxon>
        <taxon>Euteleostomi</taxon>
        <taxon>Mammalia</taxon>
        <taxon>Eutheria</taxon>
        <taxon>Euarchontoglires</taxon>
        <taxon>Glires</taxon>
        <taxon>Lagomorpha</taxon>
        <taxon>Leporidae</taxon>
        <taxon>Oryctolagus</taxon>
    </lineage>
</organism>
<gene>
    <name type="primary">CASQ1</name>
</gene>
<name>CASQ1_RABIT</name>
<dbReference type="EMBL" id="M15747">
    <property type="protein sequence ID" value="AAA31184.1"/>
    <property type="molecule type" value="mRNA"/>
</dbReference>
<dbReference type="EMBL" id="M22717">
    <property type="protein sequence ID" value="AAA31185.1"/>
    <property type="molecule type" value="Genomic_DNA"/>
</dbReference>
<dbReference type="EMBL" id="M20142">
    <property type="protein sequence ID" value="AAA31185.1"/>
    <property type="status" value="JOINED"/>
    <property type="molecule type" value="Genomic_DNA"/>
</dbReference>
<dbReference type="EMBL" id="M22712">
    <property type="protein sequence ID" value="AAA31185.1"/>
    <property type="status" value="JOINED"/>
    <property type="molecule type" value="Genomic_DNA"/>
</dbReference>
<dbReference type="EMBL" id="M22713">
    <property type="protein sequence ID" value="AAA31185.1"/>
    <property type="status" value="JOINED"/>
    <property type="molecule type" value="Genomic_DNA"/>
</dbReference>
<dbReference type="EMBL" id="M22714">
    <property type="protein sequence ID" value="AAA31185.1"/>
    <property type="status" value="JOINED"/>
    <property type="molecule type" value="Genomic_DNA"/>
</dbReference>
<dbReference type="EMBL" id="M22715">
    <property type="protein sequence ID" value="AAA31185.1"/>
    <property type="status" value="JOINED"/>
    <property type="molecule type" value="Genomic_DNA"/>
</dbReference>
<dbReference type="EMBL" id="M22716">
    <property type="protein sequence ID" value="AAA31185.1"/>
    <property type="status" value="JOINED"/>
    <property type="molecule type" value="Genomic_DNA"/>
</dbReference>
<dbReference type="PIR" id="A28142">
    <property type="entry name" value="A25887"/>
</dbReference>
<dbReference type="RefSeq" id="NP_001075737.1">
    <property type="nucleotide sequence ID" value="NM_001082268.1"/>
</dbReference>
<dbReference type="PDB" id="1A8Y">
    <property type="method" value="X-ray"/>
    <property type="resolution" value="2.40 A"/>
    <property type="chains" value="A=29-395"/>
</dbReference>
<dbReference type="PDB" id="3TRP">
    <property type="method" value="X-ray"/>
    <property type="resolution" value="1.88 A"/>
    <property type="chains" value="A=29-381"/>
</dbReference>
<dbReference type="PDB" id="3TRQ">
    <property type="method" value="X-ray"/>
    <property type="resolution" value="1.76 A"/>
    <property type="chains" value="A=29-381"/>
</dbReference>
<dbReference type="PDB" id="3US3">
    <property type="method" value="X-ray"/>
    <property type="resolution" value="1.74 A"/>
    <property type="chains" value="A=29-395"/>
</dbReference>
<dbReference type="PDB" id="3V1W">
    <property type="method" value="X-ray"/>
    <property type="resolution" value="1.91 A"/>
    <property type="chains" value="A=29-395"/>
</dbReference>
<dbReference type="PDBsum" id="1A8Y"/>
<dbReference type="PDBsum" id="3TRP"/>
<dbReference type="PDBsum" id="3TRQ"/>
<dbReference type="PDBsum" id="3US3"/>
<dbReference type="PDBsum" id="3V1W"/>
<dbReference type="SMR" id="P07221"/>
<dbReference type="FunCoup" id="P07221">
    <property type="interactions" value="19"/>
</dbReference>
<dbReference type="MINT" id="P07221"/>
<dbReference type="STRING" id="9986.ENSOCUP00000024484"/>
<dbReference type="GlyCosmos" id="P07221">
    <property type="glycosylation" value="1 site, No reported glycans"/>
</dbReference>
<dbReference type="iPTMnet" id="P07221"/>
<dbReference type="PaxDb" id="9986-ENSOCUP00000024484"/>
<dbReference type="GeneID" id="100009095"/>
<dbReference type="KEGG" id="ocu:100009095"/>
<dbReference type="CTD" id="844"/>
<dbReference type="eggNOG" id="ENOG502QQUJ">
    <property type="taxonomic scope" value="Eukaryota"/>
</dbReference>
<dbReference type="InParanoid" id="P07221"/>
<dbReference type="OrthoDB" id="10038131at2759"/>
<dbReference type="EvolutionaryTrace" id="P07221"/>
<dbReference type="Proteomes" id="UP000001811">
    <property type="component" value="Unplaced"/>
</dbReference>
<dbReference type="GO" id="GO:0005759">
    <property type="term" value="C:mitochondrial matrix"/>
    <property type="evidence" value="ECO:0000250"/>
    <property type="project" value="UniProtKB"/>
</dbReference>
<dbReference type="GO" id="GO:0016529">
    <property type="term" value="C:sarcoplasmic reticulum"/>
    <property type="evidence" value="ECO:0000314"/>
    <property type="project" value="CAFA"/>
</dbReference>
<dbReference type="GO" id="GO:0033018">
    <property type="term" value="C:sarcoplasmic reticulum lumen"/>
    <property type="evidence" value="ECO:0000314"/>
    <property type="project" value="UniProtKB"/>
</dbReference>
<dbReference type="GO" id="GO:0033017">
    <property type="term" value="C:sarcoplasmic reticulum membrane"/>
    <property type="evidence" value="ECO:0007669"/>
    <property type="project" value="UniProtKB-SubCell"/>
</dbReference>
<dbReference type="GO" id="GO:0030018">
    <property type="term" value="C:Z disc"/>
    <property type="evidence" value="ECO:0007669"/>
    <property type="project" value="TreeGrafter"/>
</dbReference>
<dbReference type="GO" id="GO:0005509">
    <property type="term" value="F:calcium ion binding"/>
    <property type="evidence" value="ECO:0000314"/>
    <property type="project" value="UniProtKB"/>
</dbReference>
<dbReference type="GO" id="GO:0000287">
    <property type="term" value="F:magnesium ion binding"/>
    <property type="evidence" value="ECO:0000314"/>
    <property type="project" value="CAFA"/>
</dbReference>
<dbReference type="GO" id="GO:0046872">
    <property type="term" value="F:metal ion binding"/>
    <property type="evidence" value="ECO:0000314"/>
    <property type="project" value="CAFA"/>
</dbReference>
<dbReference type="GO" id="GO:0030955">
    <property type="term" value="F:potassium ion binding"/>
    <property type="evidence" value="ECO:0000314"/>
    <property type="project" value="CAFA"/>
</dbReference>
<dbReference type="GO" id="GO:0042803">
    <property type="term" value="F:protein homodimerization activity"/>
    <property type="evidence" value="ECO:0000314"/>
    <property type="project" value="CAFA"/>
</dbReference>
<dbReference type="GO" id="GO:0051281">
    <property type="term" value="P:positive regulation of release of sequestered calcium ion into cytosol"/>
    <property type="evidence" value="ECO:0000250"/>
    <property type="project" value="UniProtKB"/>
</dbReference>
<dbReference type="GO" id="GO:1901341">
    <property type="term" value="P:positive regulation of store-operated calcium channel activity"/>
    <property type="evidence" value="ECO:0000250"/>
    <property type="project" value="UniProtKB"/>
</dbReference>
<dbReference type="GO" id="GO:0051258">
    <property type="term" value="P:protein polymerization"/>
    <property type="evidence" value="ECO:0000314"/>
    <property type="project" value="UniProtKB"/>
</dbReference>
<dbReference type="GO" id="GO:0014809">
    <property type="term" value="P:regulation of skeletal muscle contraction by regulation of release of sequestered calcium ion"/>
    <property type="evidence" value="ECO:0000250"/>
    <property type="project" value="UniProtKB"/>
</dbReference>
<dbReference type="GO" id="GO:2001256">
    <property type="term" value="P:regulation of store-operated calcium entry"/>
    <property type="evidence" value="ECO:0000250"/>
    <property type="project" value="UniProtKB"/>
</dbReference>
<dbReference type="GO" id="GO:0045214">
    <property type="term" value="P:sarcomere organization"/>
    <property type="evidence" value="ECO:0000250"/>
    <property type="project" value="UniProtKB"/>
</dbReference>
<dbReference type="CDD" id="cd03074">
    <property type="entry name" value="PDI_b'_Calsequestrin_C"/>
    <property type="match status" value="1"/>
</dbReference>
<dbReference type="CDD" id="cd03066">
    <property type="entry name" value="PDI_b_Calsequestrin_middle"/>
    <property type="match status" value="1"/>
</dbReference>
<dbReference type="CDD" id="cd03065">
    <property type="entry name" value="PDI_b_Calsequestrin_N"/>
    <property type="match status" value="1"/>
</dbReference>
<dbReference type="DisProt" id="DP00132"/>
<dbReference type="FunFam" id="3.40.30.10:FF:000031">
    <property type="entry name" value="Calsequestrin"/>
    <property type="match status" value="1"/>
</dbReference>
<dbReference type="FunFam" id="3.40.30.10:FF:000033">
    <property type="entry name" value="Calsequestrin"/>
    <property type="match status" value="1"/>
</dbReference>
<dbReference type="FunFam" id="3.40.30.10:FF:000047">
    <property type="entry name" value="Calsequestrin"/>
    <property type="match status" value="1"/>
</dbReference>
<dbReference type="Gene3D" id="3.40.30.10">
    <property type="entry name" value="Glutaredoxin"/>
    <property type="match status" value="3"/>
</dbReference>
<dbReference type="InterPro" id="IPR001393">
    <property type="entry name" value="Calsequestrin"/>
</dbReference>
<dbReference type="InterPro" id="IPR041860">
    <property type="entry name" value="Calsequestrin_C"/>
</dbReference>
<dbReference type="InterPro" id="IPR018233">
    <property type="entry name" value="Calsequestrin_CS"/>
</dbReference>
<dbReference type="InterPro" id="IPR041858">
    <property type="entry name" value="Calsequestrin_middle_dom"/>
</dbReference>
<dbReference type="InterPro" id="IPR041859">
    <property type="entry name" value="Calsequestrin_N"/>
</dbReference>
<dbReference type="InterPro" id="IPR036249">
    <property type="entry name" value="Thioredoxin-like_sf"/>
</dbReference>
<dbReference type="PANTHER" id="PTHR10033">
    <property type="entry name" value="CALSEQUESTRIN"/>
    <property type="match status" value="1"/>
</dbReference>
<dbReference type="PANTHER" id="PTHR10033:SF14">
    <property type="entry name" value="CALSEQUESTRIN-1"/>
    <property type="match status" value="1"/>
</dbReference>
<dbReference type="Pfam" id="PF01216">
    <property type="entry name" value="Calsequestrin"/>
    <property type="match status" value="1"/>
</dbReference>
<dbReference type="PRINTS" id="PR00312">
    <property type="entry name" value="CALSEQUESTRN"/>
</dbReference>
<dbReference type="SUPFAM" id="SSF52833">
    <property type="entry name" value="Thioredoxin-like"/>
    <property type="match status" value="3"/>
</dbReference>
<dbReference type="PROSITE" id="PS00863">
    <property type="entry name" value="CALSEQUESTRIN_1"/>
    <property type="match status" value="1"/>
</dbReference>
<dbReference type="PROSITE" id="PS00864">
    <property type="entry name" value="CALSEQUESTRIN_2"/>
    <property type="match status" value="1"/>
</dbReference>
<feature type="signal peptide" evidence="11">
    <location>
        <begin position="1"/>
        <end position="28"/>
    </location>
</feature>
<feature type="chain" id="PRO_0000004214" description="Calsequestrin-1">
    <location>
        <begin position="29"/>
        <end position="395"/>
    </location>
</feature>
<feature type="region of interest" description="Disordered" evidence="4">
    <location>
        <begin position="376"/>
        <end position="395"/>
    </location>
</feature>
<feature type="modified residue" description="Phosphotyrosine" evidence="2">
    <location>
        <position position="37"/>
    </location>
</feature>
<feature type="modified residue" description="Phosphoserine" evidence="2">
    <location>
        <position position="75"/>
    </location>
</feature>
<feature type="modified residue" description="Phosphothreonine" evidence="2">
    <location>
        <position position="118"/>
    </location>
</feature>
<feature type="modified residue" description="Phosphoserine" evidence="2">
    <location>
        <position position="210"/>
    </location>
</feature>
<feature type="glycosylation site" description="N-linked (GlcNAc...) asparagine" evidence="9">
    <location>
        <position position="344"/>
    </location>
</feature>
<feature type="sequence conflict" description="In Ref. 4; AA sequence." evidence="17" ref="4">
    <original>ED</original>
    <variation>DE</variation>
    <location>
        <begin position="387"/>
        <end position="388"/>
    </location>
</feature>
<feature type="turn" evidence="20">
    <location>
        <begin position="48"/>
        <end position="50"/>
    </location>
</feature>
<feature type="helix" evidence="20">
    <location>
        <begin position="51"/>
        <end position="57"/>
    </location>
</feature>
<feature type="strand" evidence="20">
    <location>
        <begin position="59"/>
        <end position="66"/>
    </location>
</feature>
<feature type="helix" evidence="20">
    <location>
        <begin position="73"/>
        <end position="93"/>
    </location>
</feature>
<feature type="turn" evidence="20">
    <location>
        <begin position="94"/>
        <end position="97"/>
    </location>
</feature>
<feature type="strand" evidence="20">
    <location>
        <begin position="98"/>
        <end position="104"/>
    </location>
</feature>
<feature type="turn" evidence="20">
    <location>
        <begin position="105"/>
        <end position="108"/>
    </location>
</feature>
<feature type="helix" evidence="20">
    <location>
        <begin position="109"/>
        <end position="115"/>
    </location>
</feature>
<feature type="strand" evidence="20">
    <location>
        <begin position="122"/>
        <end position="127"/>
    </location>
</feature>
<feature type="strand" evidence="20">
    <location>
        <begin position="130"/>
        <end position="133"/>
    </location>
</feature>
<feature type="helix" evidence="20">
    <location>
        <begin position="140"/>
        <end position="151"/>
    </location>
</feature>
<feature type="strand" evidence="20">
    <location>
        <begin position="154"/>
        <end position="157"/>
    </location>
</feature>
<feature type="helix" evidence="20">
    <location>
        <begin position="161"/>
        <end position="169"/>
    </location>
</feature>
<feature type="strand" evidence="20">
    <location>
        <begin position="175"/>
        <end position="179"/>
    </location>
</feature>
<feature type="helix" evidence="20">
    <location>
        <begin position="186"/>
        <end position="198"/>
    </location>
</feature>
<feature type="turn" evidence="20">
    <location>
        <begin position="199"/>
        <end position="201"/>
    </location>
</feature>
<feature type="strand" evidence="20">
    <location>
        <begin position="204"/>
        <end position="207"/>
    </location>
</feature>
<feature type="helix" evidence="20">
    <location>
        <begin position="210"/>
        <end position="216"/>
    </location>
</feature>
<feature type="strand" evidence="20">
    <location>
        <begin position="223"/>
        <end position="226"/>
    </location>
</feature>
<feature type="strand" evidence="18">
    <location>
        <begin position="231"/>
        <end position="235"/>
    </location>
</feature>
<feature type="strand" evidence="20">
    <location>
        <begin position="237"/>
        <end position="240"/>
    </location>
</feature>
<feature type="helix" evidence="20">
    <location>
        <begin position="243"/>
        <end position="252"/>
    </location>
</feature>
<feature type="strand" evidence="20">
    <location>
        <begin position="257"/>
        <end position="260"/>
    </location>
</feature>
<feature type="helix" evidence="20">
    <location>
        <begin position="263"/>
        <end position="265"/>
    </location>
</feature>
<feature type="helix" evidence="20">
    <location>
        <begin position="266"/>
        <end position="271"/>
    </location>
</feature>
<feature type="strand" evidence="20">
    <location>
        <begin position="277"/>
        <end position="282"/>
    </location>
</feature>
<feature type="helix" evidence="20">
    <location>
        <begin position="288"/>
        <end position="303"/>
    </location>
</feature>
<feature type="turn" evidence="20">
    <location>
        <begin position="304"/>
        <end position="306"/>
    </location>
</feature>
<feature type="strand" evidence="20">
    <location>
        <begin position="312"/>
        <end position="315"/>
    </location>
</feature>
<feature type="helix" evidence="20">
    <location>
        <begin position="317"/>
        <end position="319"/>
    </location>
</feature>
<feature type="turn" evidence="20">
    <location>
        <begin position="321"/>
        <end position="323"/>
    </location>
</feature>
<feature type="helix" evidence="20">
    <location>
        <begin position="324"/>
        <end position="331"/>
    </location>
</feature>
<feature type="strand" evidence="20">
    <location>
        <begin position="339"/>
        <end position="344"/>
    </location>
</feature>
<feature type="turn" evidence="20">
    <location>
        <begin position="345"/>
        <end position="347"/>
    </location>
</feature>
<feature type="strand" evidence="20">
    <location>
        <begin position="350"/>
        <end position="352"/>
    </location>
</feature>
<feature type="helix" evidence="20">
    <location>
        <begin position="364"/>
        <end position="376"/>
    </location>
</feature>
<feature type="strand" evidence="19">
    <location>
        <begin position="377"/>
        <end position="379"/>
    </location>
</feature>
<comment type="function">
    <text evidence="3 5 6 7 9 12 14 16">Calsequestrin is a high-capacity, moderate affinity, calcium-binding protein and thus acts as an internal calcium store in muscle. Calcium ions are bound by clusters of acidic residues at the protein surface, often at the interface between subunits. Can bind around 80 Ca(2+) ions. Regulates the release of lumenal Ca(2+) via the calcium release channel RYR1; this plays an important role in triggering muscle contraction. Negatively regulates store-operated Ca(2+) entry (SOCE) activity (By similarity).</text>
</comment>
<comment type="subunit">
    <text evidence="3 5 6 7 9 10 14 15">Monomer; increases in response to a depletion of intracellular calcium. Homodimer. Homotetramer and homopolymer. Can form linear homooligomers. Ca(2+) ions promote oligomerization. Interacts (via C-terminal end and preferentially with the monomeric form) with STIM1; this interaction increases in response to a depletion of intracellular calcium, decreases both STIM1 aggregation and clustering, interaction of STIM1 with ORAI1 and store-operated Ca(2+) entry (SOCE) activity (By similarity). Interacts with ASPH and TRDN (PubMed:15731387, PubMed:19230141, PubMed:19398037).</text>
</comment>
<comment type="subcellular location">
    <subcellularLocation>
        <location evidence="3">Endoplasmic reticulum</location>
    </subcellularLocation>
    <subcellularLocation>
        <location evidence="3">Sarcoplasmic reticulum</location>
    </subcellularLocation>
    <subcellularLocation>
        <location evidence="5 6 14">Sarcoplasmic reticulum lumen</location>
    </subcellularLocation>
    <subcellularLocation>
        <location evidence="1">Mitochondrion matrix</location>
    </subcellularLocation>
    <subcellularLocation>
        <location>Sarcoplasmic reticulum membrane</location>
        <topology>Peripheral membrane protein</topology>
        <orientation evidence="5">Lumenal side</orientation>
    </subcellularLocation>
    <text evidence="3 5">This isoform of calsequestrin occurs in the sarcoplasmic reticulum's terminal cisternae luminal spaces of fast skeletal muscle cells (PubMed:15731387). Preferentially forms linear and round aggregates in the endoplasmic reticulum (ER) of resting cells. In a minority of cells, homogeneously detected in the ER lumen. Colocalizes with STIM1 at endoplasmic reticulum in response to a depletion of intracellular calcium (By similarity).</text>
</comment>
<comment type="tissue specificity">
    <text evidence="12 13 14">Detected in skeletal muscle (at protein level). Detected in skeletal muscle.</text>
</comment>
<comment type="PTM">
    <text evidence="9">N-glycosylated.</text>
</comment>
<comment type="similarity">
    <text evidence="17">Belongs to the calsequestrin family.</text>
</comment>
<comment type="caution">
    <text evidence="8 9 17">Phosphorylated at very low, substoichiometric levels when isolated from skeletal muscle sarcoplasmic reticulum (PubMed:1985907). Can be phosphorylated by CK2 at Thr-381 (in vitro), albeit with low efficiency, suggesting this is not a physiological CK2 substrate (PubMed:1985907). Not phosphorylated at Thr-381 (PubMed:22170046).</text>
</comment>
<keyword id="KW-0002">3D-structure</keyword>
<keyword id="KW-0106">Calcium</keyword>
<keyword id="KW-0903">Direct protein sequencing</keyword>
<keyword id="KW-0256">Endoplasmic reticulum</keyword>
<keyword id="KW-0325">Glycoprotein</keyword>
<keyword id="KW-0472">Membrane</keyword>
<keyword id="KW-0479">Metal-binding</keyword>
<keyword id="KW-0496">Mitochondrion</keyword>
<keyword id="KW-0514">Muscle protein</keyword>
<keyword id="KW-0597">Phosphoprotein</keyword>
<keyword id="KW-1185">Reference proteome</keyword>
<keyword id="KW-0703">Sarcoplasmic reticulum</keyword>
<keyword id="KW-0732">Signal</keyword>